<reference key="1">
    <citation type="journal article" date="2019" name="Appl. Environ. Microbiol.">
        <title>Specific xylan activity revealed for AA9 lytic polysaccharide monooxygenases of the thermophilic fungus Malbranchea cinnamomea by functional characterization.</title>
        <authorList>
            <person name="Huettner S."/>
            <person name="Varnai A."/>
            <person name="Petrovic D.M."/>
            <person name="Bach C.X."/>
            <person name="Kim Anh D.T."/>
            <person name="Thanh V.N."/>
            <person name="Eijsink V.G.H."/>
            <person name="Larsbrink J."/>
            <person name="Olsson L."/>
        </authorList>
    </citation>
    <scope>NUCLEOTIDE SEQUENCE [GENOMIC DNA]</scope>
    <scope>FUNCTION</scope>
    <scope>CATALYTIC ACTIVITY</scope>
    <source>
        <strain>FCH 10.5</strain>
    </source>
</reference>
<sequence>MRIEKLLNAALLAGAVSAHTIMTSLVVDGTEYPPGHAVRIPSYNGPITDVTSNSVACNGPPNPTTPSSEIIMVRAGSTIQGKWRHTETDVIDPSHKGPVMAYLKKVDDAINDPGTGDGWFKIWEDGLHDDGTWAVDDLIAANGYQDIPIPPCLADGQYLLRAEIIALHGASQPGGAQLYMECAQIGVVGGSGTANPSTVAFPGAYKADDPGITVNIYWPPLEEYIIPGPDPFTC</sequence>
<keyword id="KW-0119">Carbohydrate metabolism</keyword>
<keyword id="KW-0136">Cellulose degradation</keyword>
<keyword id="KW-0186">Copper</keyword>
<keyword id="KW-1015">Disulfide bond</keyword>
<keyword id="KW-0479">Metal-binding</keyword>
<keyword id="KW-0503">Monooxygenase</keyword>
<keyword id="KW-0560">Oxidoreductase</keyword>
<keyword id="KW-0624">Polysaccharide degradation</keyword>
<keyword id="KW-0964">Secreted</keyword>
<keyword id="KW-0732">Signal</keyword>
<feature type="signal peptide" evidence="5">
    <location>
        <begin position="1"/>
        <end position="18"/>
    </location>
</feature>
<feature type="chain" id="PRO_5023896124" description="AA9 family lytic polysaccharide monooxygenase D">
    <location>
        <begin position="19"/>
        <end position="234"/>
    </location>
</feature>
<feature type="binding site" evidence="4">
    <location>
        <position position="19"/>
    </location>
    <ligand>
        <name>Cu(2+)</name>
        <dbReference type="ChEBI" id="CHEBI:29036"/>
        <note>catalytic</note>
    </ligand>
</feature>
<feature type="binding site" evidence="4">
    <location>
        <position position="95"/>
    </location>
    <ligand>
        <name>Cu(2+)</name>
        <dbReference type="ChEBI" id="CHEBI:29036"/>
        <note>catalytic</note>
    </ligand>
</feature>
<feature type="binding site" evidence="3">
    <location>
        <position position="168"/>
    </location>
    <ligand>
        <name>O2</name>
        <dbReference type="ChEBI" id="CHEBI:15379"/>
    </ligand>
</feature>
<feature type="binding site" evidence="3">
    <location>
        <position position="177"/>
    </location>
    <ligand>
        <name>O2</name>
        <dbReference type="ChEBI" id="CHEBI:15379"/>
    </ligand>
</feature>
<feature type="binding site" evidence="4">
    <location>
        <position position="179"/>
    </location>
    <ligand>
        <name>Cu(2+)</name>
        <dbReference type="ChEBI" id="CHEBI:29036"/>
        <note>catalytic</note>
    </ligand>
</feature>
<feature type="disulfide bond" evidence="1">
    <location>
        <begin position="57"/>
        <end position="182"/>
    </location>
</feature>
<evidence type="ECO:0000250" key="1">
    <source>
        <dbReference type="UniProtKB" id="A0A4P8PKE4"/>
    </source>
</evidence>
<evidence type="ECO:0000250" key="2">
    <source>
        <dbReference type="UniProtKB" id="A0A5J6BJN2"/>
    </source>
</evidence>
<evidence type="ECO:0000250" key="3">
    <source>
        <dbReference type="UniProtKB" id="Q1K8B6"/>
    </source>
</evidence>
<evidence type="ECO:0000250" key="4">
    <source>
        <dbReference type="UniProtKB" id="Q7Z9M7"/>
    </source>
</evidence>
<evidence type="ECO:0000255" key="5"/>
<evidence type="ECO:0000303" key="6">
    <source>
    </source>
</evidence>
<evidence type="ECO:0000305" key="7"/>
<evidence type="ECO:0000305" key="8">
    <source>
    </source>
</evidence>
<name>LP9D_MALCI</name>
<comment type="function">
    <text evidence="2">Lytic polysaccharide monooxygenase (LPMO) that depolymerizes crystalline and amorphous polysaccharides via the oxidation of scissile alpha- or beta-(1-4)-glycosidic bonds, yielding C1 or C4 oxidation products (By similarity). Catalysis by LPMOs requires the reduction of the active-site copper from Cu(II) to Cu(I) by a reducing agent and H(2)O(2) or O(2) as a cosubstrate (By similarity).</text>
</comment>
<comment type="catalytic activity">
    <reaction evidence="4">
        <text>[(1-&gt;4)-beta-D-glucosyl]n+m + reduced acceptor + O2 = 4-dehydro-beta-D-glucosyl-[(1-&gt;4)-beta-D-glucosyl]n-1 + [(1-&gt;4)-beta-D-glucosyl]m + acceptor + H2O.</text>
        <dbReference type="EC" id="1.14.99.56"/>
    </reaction>
</comment>
<comment type="cofactor">
    <cofactor evidence="3">
        <name>Cu(2+)</name>
        <dbReference type="ChEBI" id="CHEBI:29036"/>
    </cofactor>
    <text evidence="3">Binds 1 copper ion per subunit.</text>
</comment>
<comment type="subcellular location">
    <subcellularLocation>
        <location evidence="8">Secreted</location>
    </subcellularLocation>
</comment>
<comment type="biotechnology">
    <text evidence="2">Lignocellulose is the most abundant polymeric composite on Earth and is a recalcitrant but promising renewable substrate for industrial biotechnology applications. Together with cellobiose dehydrogenases (CDHs) an enzymatic system capable of oxidative cellulose cleavage is formed, which increases the efficiency of cellulases and put LPMOs at focus of biofuel research.</text>
</comment>
<comment type="similarity">
    <text evidence="7">Belongs to the polysaccharide monooxygenase AA9 family.</text>
</comment>
<organism>
    <name type="scientific">Malbranchea cinnamomea</name>
    <name type="common">Thermophilic fungus</name>
    <name type="synonym">Malbranchea sulfurea</name>
    <dbReference type="NCBI Taxonomy" id="5041"/>
    <lineage>
        <taxon>Eukaryota</taxon>
        <taxon>Fungi</taxon>
        <taxon>Dikarya</taxon>
        <taxon>Ascomycota</taxon>
        <taxon>Pezizomycotina</taxon>
        <taxon>Eurotiomycetes</taxon>
        <taxon>Eurotiomycetidae</taxon>
        <taxon>Onygenales</taxon>
        <taxon>Malbrancheaceae</taxon>
        <taxon>Malbranchea</taxon>
    </lineage>
</organism>
<protein>
    <recommendedName>
        <fullName evidence="6">AA9 family lytic polysaccharide monooxygenase D</fullName>
        <shortName evidence="6">AA9D</shortName>
        <shortName evidence="6">LPMO9D</shortName>
        <ecNumber evidence="4">1.14.99.56</ecNumber>
    </recommendedName>
    <alternativeName>
        <fullName evidence="7">Cellulase LPMO9D</fullName>
    </alternativeName>
    <alternativeName>
        <fullName evidence="7">Endo-beta-1,4-glucanase LPMO9D</fullName>
        <shortName evidence="7">Endoglucanase LPMO9D</shortName>
    </alternativeName>
    <alternativeName>
        <fullName evidence="7">Glycosyl hydrolase 61 family protein LPMO9D</fullName>
    </alternativeName>
</protein>
<accession>A0A5J6BJN5</accession>
<dbReference type="EC" id="1.14.99.56" evidence="4"/>
<dbReference type="EMBL" id="MK135885">
    <property type="protein sequence ID" value="QDV60868.1"/>
    <property type="molecule type" value="Genomic_DNA"/>
</dbReference>
<dbReference type="SMR" id="A0A5J6BJN5"/>
<dbReference type="GO" id="GO:0005576">
    <property type="term" value="C:extracellular region"/>
    <property type="evidence" value="ECO:0007669"/>
    <property type="project" value="UniProtKB-SubCell"/>
</dbReference>
<dbReference type="GO" id="GO:0046872">
    <property type="term" value="F:metal ion binding"/>
    <property type="evidence" value="ECO:0007669"/>
    <property type="project" value="UniProtKB-KW"/>
</dbReference>
<dbReference type="GO" id="GO:0004497">
    <property type="term" value="F:monooxygenase activity"/>
    <property type="evidence" value="ECO:0007669"/>
    <property type="project" value="UniProtKB-KW"/>
</dbReference>
<dbReference type="GO" id="GO:0030245">
    <property type="term" value="P:cellulose catabolic process"/>
    <property type="evidence" value="ECO:0007669"/>
    <property type="project" value="UniProtKB-KW"/>
</dbReference>
<dbReference type="CDD" id="cd21175">
    <property type="entry name" value="LPMO_AA9"/>
    <property type="match status" value="1"/>
</dbReference>
<dbReference type="Gene3D" id="2.70.50.70">
    <property type="match status" value="1"/>
</dbReference>
<dbReference type="InterPro" id="IPR049892">
    <property type="entry name" value="AA9"/>
</dbReference>
<dbReference type="InterPro" id="IPR005103">
    <property type="entry name" value="AA9_LPMO"/>
</dbReference>
<dbReference type="PANTHER" id="PTHR33353:SF18">
    <property type="entry name" value="ENDOGLUCANASE II"/>
    <property type="match status" value="1"/>
</dbReference>
<dbReference type="PANTHER" id="PTHR33353">
    <property type="entry name" value="PUTATIVE (AFU_ORTHOLOGUE AFUA_1G12560)-RELATED"/>
    <property type="match status" value="1"/>
</dbReference>
<dbReference type="Pfam" id="PF03443">
    <property type="entry name" value="AA9"/>
    <property type="match status" value="1"/>
</dbReference>
<proteinExistence type="evidence at protein level"/>
<gene>
    <name evidence="6" type="primary">LPMO9D</name>
    <name evidence="6" type="synonym">AA9D</name>
</gene>